<sequence>MADRGQRRGCAPGIASALRASFQGKSRPWTQTRYWAFALLTPLVVAMVLTGCSASGTQLELAPTADRRAAVGTTSDINQQDPATLQDGGNLRLSLTDFPPNFNILHIDGNNAEVAAMMKATLPRAFIIGPDGSTTVDTNYFTSIELTRTAPQVVTYTINPEAVWSDGTPITWRDIASQIHAISGADKAFEIASSSGAERVASVTRGVDDRQAVVTFAKPYAEWRGMFAGNGMLLPASMTATPEAFNKGQLDGPGPSAGPFVVSALDRTAQRIVLTRNPRWWGARPRLDSITYLVLDDAARLPALQNNTIDATGVGTLDQLTIAARTKGISIRRAPGPSWYHFTLNGAPGSILADKALRLAIAKGIDRYTIARVAQYGLTSDPVPLNNHVFVAGQDGYQDNSGVVAYNPEQAKRELDALGWRRSGAFREKDGRQLVIRDLFYDAQSTRQFAQIAQHTLAQIGVKLELQAKSGSGFFSDYVNVGAFDIAQFGWVGDAFPLSSLTQIYASDGESNFGKIGSPQIDAAIERTLAELDPGKARALANQVDELIWAEGFSLPLTQSPGTVAVRSTLANFGATGLADLDYTAIGFMRR</sequence>
<organism>
    <name type="scientific">Mycobacterium tuberculosis (strain CDC 1551 / Oshkosh)</name>
    <dbReference type="NCBI Taxonomy" id="83331"/>
    <lineage>
        <taxon>Bacteria</taxon>
        <taxon>Bacillati</taxon>
        <taxon>Actinomycetota</taxon>
        <taxon>Actinomycetes</taxon>
        <taxon>Mycobacteriales</taxon>
        <taxon>Mycobacteriaceae</taxon>
        <taxon>Mycobacterium</taxon>
        <taxon>Mycobacterium tuberculosis complex</taxon>
    </lineage>
</organism>
<accession>P9WGU4</accession>
<accession>L0T665</accession>
<accession>P66771</accession>
<accession>Q11041</accession>
<gene>
    <name evidence="1" type="primary">oppA</name>
    <name type="ordered locus">MT1317</name>
</gene>
<feature type="chain" id="PRO_0000428301" description="Oligopeptide-binding protein OppA">
    <location>
        <begin position="1"/>
        <end position="591"/>
    </location>
</feature>
<name>OPPA_MYCTO</name>
<comment type="function">
    <text evidence="1">Part of the ABC transporter complex OppABCD involved in the uptake of oligopeptides (By similarity). Peptide-binding protein that shows broad specificity but a moderate preference for hydrophobic oligopeptides and those that are 6-16 amino acids long (By similarity).</text>
</comment>
<comment type="subunit">
    <text evidence="1">The complex is composed of an ATP-binding protein (OppD), two transmembrane proteins (OppB and OppC) and a solute-binding protein (OppA).</text>
</comment>
<comment type="subcellular location">
    <subcellularLocation>
        <location evidence="1">Periplasm</location>
    </subcellularLocation>
    <text evidence="1">Attached to the external side of the transmembrane subunits OppB and OppC.</text>
</comment>
<comment type="similarity">
    <text evidence="2">Belongs to the bacterial solute-binding protein 5 family.</text>
</comment>
<proteinExistence type="inferred from homology"/>
<evidence type="ECO:0000250" key="1">
    <source>
        <dbReference type="UniProtKB" id="P9WGU5"/>
    </source>
</evidence>
<evidence type="ECO:0000305" key="2"/>
<protein>
    <recommendedName>
        <fullName evidence="1">Oligopeptide-binding protein OppA</fullName>
    </recommendedName>
</protein>
<keyword id="KW-0571">Peptide transport</keyword>
<keyword id="KW-0574">Periplasm</keyword>
<keyword id="KW-0653">Protein transport</keyword>
<keyword id="KW-1185">Reference proteome</keyword>
<keyword id="KW-0813">Transport</keyword>
<reference key="1">
    <citation type="journal article" date="2002" name="J. Bacteriol.">
        <title>Whole-genome comparison of Mycobacterium tuberculosis clinical and laboratory strains.</title>
        <authorList>
            <person name="Fleischmann R.D."/>
            <person name="Alland D."/>
            <person name="Eisen J.A."/>
            <person name="Carpenter L."/>
            <person name="White O."/>
            <person name="Peterson J.D."/>
            <person name="DeBoy R.T."/>
            <person name="Dodson R.J."/>
            <person name="Gwinn M.L."/>
            <person name="Haft D.H."/>
            <person name="Hickey E.K."/>
            <person name="Kolonay J.F."/>
            <person name="Nelson W.C."/>
            <person name="Umayam L.A."/>
            <person name="Ermolaeva M.D."/>
            <person name="Salzberg S.L."/>
            <person name="Delcher A."/>
            <person name="Utterback T.R."/>
            <person name="Weidman J.F."/>
            <person name="Khouri H.M."/>
            <person name="Gill J."/>
            <person name="Mikula A."/>
            <person name="Bishai W."/>
            <person name="Jacobs W.R. Jr."/>
            <person name="Venter J.C."/>
            <person name="Fraser C.M."/>
        </authorList>
    </citation>
    <scope>NUCLEOTIDE SEQUENCE [LARGE SCALE GENOMIC DNA]</scope>
    <source>
        <strain>CDC 1551 / Oshkosh</strain>
    </source>
</reference>
<dbReference type="EMBL" id="AE000516">
    <property type="protein sequence ID" value="AAK45578.1"/>
    <property type="molecule type" value="Genomic_DNA"/>
</dbReference>
<dbReference type="PIR" id="H70755">
    <property type="entry name" value="H70755"/>
</dbReference>
<dbReference type="RefSeq" id="WP_003900310.1">
    <property type="nucleotide sequence ID" value="NZ_KK341227.1"/>
</dbReference>
<dbReference type="SMR" id="P9WGU4"/>
<dbReference type="GeneID" id="45425252"/>
<dbReference type="KEGG" id="mtc:MT1317"/>
<dbReference type="PATRIC" id="fig|83331.31.peg.1423"/>
<dbReference type="HOGENOM" id="CLU_017028_11_1_11"/>
<dbReference type="Proteomes" id="UP000001020">
    <property type="component" value="Chromosome"/>
</dbReference>
<dbReference type="GO" id="GO:0043190">
    <property type="term" value="C:ATP-binding cassette (ABC) transporter complex"/>
    <property type="evidence" value="ECO:0007669"/>
    <property type="project" value="InterPro"/>
</dbReference>
<dbReference type="GO" id="GO:0042597">
    <property type="term" value="C:periplasmic space"/>
    <property type="evidence" value="ECO:0007669"/>
    <property type="project" value="UniProtKB-SubCell"/>
</dbReference>
<dbReference type="GO" id="GO:1904680">
    <property type="term" value="F:peptide transmembrane transporter activity"/>
    <property type="evidence" value="ECO:0007669"/>
    <property type="project" value="TreeGrafter"/>
</dbReference>
<dbReference type="GO" id="GO:0015833">
    <property type="term" value="P:peptide transport"/>
    <property type="evidence" value="ECO:0007669"/>
    <property type="project" value="TreeGrafter"/>
</dbReference>
<dbReference type="CDD" id="cd08501">
    <property type="entry name" value="PBP2_Lpqw"/>
    <property type="match status" value="1"/>
</dbReference>
<dbReference type="FunFam" id="3.10.105.10:FF:000032">
    <property type="entry name" value="Probable periplasmic oligopeptide-binding lipoprotein oppA"/>
    <property type="match status" value="1"/>
</dbReference>
<dbReference type="Gene3D" id="3.90.76.10">
    <property type="entry name" value="Dipeptide-binding Protein, Domain 1"/>
    <property type="match status" value="1"/>
</dbReference>
<dbReference type="Gene3D" id="3.10.105.10">
    <property type="entry name" value="Dipeptide-binding Protein, Domain 3"/>
    <property type="match status" value="1"/>
</dbReference>
<dbReference type="Gene3D" id="3.40.190.10">
    <property type="entry name" value="Periplasmic binding protein-like II"/>
    <property type="match status" value="1"/>
</dbReference>
<dbReference type="InterPro" id="IPR030678">
    <property type="entry name" value="Peptide/Ni-bd"/>
</dbReference>
<dbReference type="InterPro" id="IPR039424">
    <property type="entry name" value="SBP_5"/>
</dbReference>
<dbReference type="InterPro" id="IPR000914">
    <property type="entry name" value="SBP_5_dom"/>
</dbReference>
<dbReference type="PANTHER" id="PTHR30290:SF65">
    <property type="entry name" value="MONOACYL PHOSPHATIDYLINOSITOL TETRAMANNOSIDE-BINDING PROTEIN LPQW-RELATED"/>
    <property type="match status" value="1"/>
</dbReference>
<dbReference type="PANTHER" id="PTHR30290">
    <property type="entry name" value="PERIPLASMIC BINDING COMPONENT OF ABC TRANSPORTER"/>
    <property type="match status" value="1"/>
</dbReference>
<dbReference type="Pfam" id="PF00496">
    <property type="entry name" value="SBP_bac_5"/>
    <property type="match status" value="1"/>
</dbReference>
<dbReference type="PIRSF" id="PIRSF002741">
    <property type="entry name" value="MppA"/>
    <property type="match status" value="1"/>
</dbReference>
<dbReference type="SUPFAM" id="SSF53850">
    <property type="entry name" value="Periplasmic binding protein-like II"/>
    <property type="match status" value="1"/>
</dbReference>